<sequence>MTWQRPDGRQPDQLRPIRFHREYTHFAAGSVLAECGQTKVLCTVSVQPGVPRFLEDTGQGWLTAEYRMLPGSTPERQRRELMKLSGRTQEIQRLIGRSLRAALDLQALGERTLVVDADVLQADAGTRTTSITGGFVALVDAVNQLVSKGEIPQSPIRHHVAAVSVGLLEGQPFLDLNYPEDVGAAVDLNVVATEQLELLEVQGTAEEGTLPRPQLNQMLDLAEIGIQQLIEAQRQALAS</sequence>
<evidence type="ECO:0000255" key="1">
    <source>
        <dbReference type="HAMAP-Rule" id="MF_00564"/>
    </source>
</evidence>
<protein>
    <recommendedName>
        <fullName evidence="1">Ribonuclease PH</fullName>
        <shortName evidence="1">RNase PH</shortName>
        <ecNumber evidence="1">2.7.7.56</ecNumber>
    </recommendedName>
    <alternativeName>
        <fullName evidence="1">tRNA nucleotidyltransferase</fullName>
    </alternativeName>
</protein>
<keyword id="KW-0548">Nucleotidyltransferase</keyword>
<keyword id="KW-1185">Reference proteome</keyword>
<keyword id="KW-0694">RNA-binding</keyword>
<keyword id="KW-0698">rRNA processing</keyword>
<keyword id="KW-0808">Transferase</keyword>
<keyword id="KW-0819">tRNA processing</keyword>
<keyword id="KW-0820">tRNA-binding</keyword>
<feature type="chain" id="PRO_1000082281" description="Ribonuclease PH">
    <location>
        <begin position="1"/>
        <end position="239"/>
    </location>
</feature>
<feature type="binding site" evidence="1">
    <location>
        <position position="87"/>
    </location>
    <ligand>
        <name>phosphate</name>
        <dbReference type="ChEBI" id="CHEBI:43474"/>
        <note>substrate</note>
    </ligand>
</feature>
<feature type="binding site" evidence="1">
    <location>
        <begin position="125"/>
        <end position="127"/>
    </location>
    <ligand>
        <name>phosphate</name>
        <dbReference type="ChEBI" id="CHEBI:43474"/>
        <note>substrate</note>
    </ligand>
</feature>
<accession>B0CAB9</accession>
<organism>
    <name type="scientific">Acaryochloris marina (strain MBIC 11017)</name>
    <dbReference type="NCBI Taxonomy" id="329726"/>
    <lineage>
        <taxon>Bacteria</taxon>
        <taxon>Bacillati</taxon>
        <taxon>Cyanobacteriota</taxon>
        <taxon>Cyanophyceae</taxon>
        <taxon>Acaryochloridales</taxon>
        <taxon>Acaryochloridaceae</taxon>
        <taxon>Acaryochloris</taxon>
    </lineage>
</organism>
<name>RNPH_ACAM1</name>
<gene>
    <name evidence="1" type="primary">rph</name>
    <name type="ordered locus">AM1_2854</name>
</gene>
<dbReference type="EC" id="2.7.7.56" evidence="1"/>
<dbReference type="EMBL" id="CP000828">
    <property type="protein sequence ID" value="ABW27854.1"/>
    <property type="molecule type" value="Genomic_DNA"/>
</dbReference>
<dbReference type="RefSeq" id="WP_012163297.1">
    <property type="nucleotide sequence ID" value="NC_009925.1"/>
</dbReference>
<dbReference type="SMR" id="B0CAB9"/>
<dbReference type="STRING" id="329726.AM1_2854"/>
<dbReference type="KEGG" id="amr:AM1_2854"/>
<dbReference type="eggNOG" id="COG0689">
    <property type="taxonomic scope" value="Bacteria"/>
</dbReference>
<dbReference type="HOGENOM" id="CLU_050858_0_0_3"/>
<dbReference type="OrthoDB" id="9802265at2"/>
<dbReference type="Proteomes" id="UP000000268">
    <property type="component" value="Chromosome"/>
</dbReference>
<dbReference type="GO" id="GO:0000175">
    <property type="term" value="F:3'-5'-RNA exonuclease activity"/>
    <property type="evidence" value="ECO:0007669"/>
    <property type="project" value="UniProtKB-UniRule"/>
</dbReference>
<dbReference type="GO" id="GO:0000049">
    <property type="term" value="F:tRNA binding"/>
    <property type="evidence" value="ECO:0007669"/>
    <property type="project" value="UniProtKB-UniRule"/>
</dbReference>
<dbReference type="GO" id="GO:0009022">
    <property type="term" value="F:tRNA nucleotidyltransferase activity"/>
    <property type="evidence" value="ECO:0007669"/>
    <property type="project" value="UniProtKB-UniRule"/>
</dbReference>
<dbReference type="GO" id="GO:0016075">
    <property type="term" value="P:rRNA catabolic process"/>
    <property type="evidence" value="ECO:0007669"/>
    <property type="project" value="UniProtKB-UniRule"/>
</dbReference>
<dbReference type="GO" id="GO:0006364">
    <property type="term" value="P:rRNA processing"/>
    <property type="evidence" value="ECO:0007669"/>
    <property type="project" value="UniProtKB-KW"/>
</dbReference>
<dbReference type="GO" id="GO:0008033">
    <property type="term" value="P:tRNA processing"/>
    <property type="evidence" value="ECO:0007669"/>
    <property type="project" value="UniProtKB-UniRule"/>
</dbReference>
<dbReference type="CDD" id="cd11362">
    <property type="entry name" value="RNase_PH_bact"/>
    <property type="match status" value="1"/>
</dbReference>
<dbReference type="FunFam" id="3.30.230.70:FF:000003">
    <property type="entry name" value="Ribonuclease PH"/>
    <property type="match status" value="1"/>
</dbReference>
<dbReference type="Gene3D" id="3.30.230.70">
    <property type="entry name" value="GHMP Kinase, N-terminal domain"/>
    <property type="match status" value="1"/>
</dbReference>
<dbReference type="HAMAP" id="MF_00564">
    <property type="entry name" value="RNase_PH"/>
    <property type="match status" value="1"/>
</dbReference>
<dbReference type="InterPro" id="IPR001247">
    <property type="entry name" value="ExoRNase_PH_dom1"/>
</dbReference>
<dbReference type="InterPro" id="IPR015847">
    <property type="entry name" value="ExoRNase_PH_dom2"/>
</dbReference>
<dbReference type="InterPro" id="IPR036345">
    <property type="entry name" value="ExoRNase_PH_dom2_sf"/>
</dbReference>
<dbReference type="InterPro" id="IPR027408">
    <property type="entry name" value="PNPase/RNase_PH_dom_sf"/>
</dbReference>
<dbReference type="InterPro" id="IPR020568">
    <property type="entry name" value="Ribosomal_Su5_D2-typ_SF"/>
</dbReference>
<dbReference type="InterPro" id="IPR050080">
    <property type="entry name" value="RNase_PH"/>
</dbReference>
<dbReference type="InterPro" id="IPR002381">
    <property type="entry name" value="RNase_PH_bac-type"/>
</dbReference>
<dbReference type="InterPro" id="IPR018336">
    <property type="entry name" value="RNase_PH_CS"/>
</dbReference>
<dbReference type="NCBIfam" id="TIGR01966">
    <property type="entry name" value="RNasePH"/>
    <property type="match status" value="1"/>
</dbReference>
<dbReference type="PANTHER" id="PTHR11953">
    <property type="entry name" value="EXOSOME COMPLEX COMPONENT"/>
    <property type="match status" value="1"/>
</dbReference>
<dbReference type="PANTHER" id="PTHR11953:SF0">
    <property type="entry name" value="EXOSOME COMPLEX COMPONENT RRP41"/>
    <property type="match status" value="1"/>
</dbReference>
<dbReference type="Pfam" id="PF01138">
    <property type="entry name" value="RNase_PH"/>
    <property type="match status" value="1"/>
</dbReference>
<dbReference type="Pfam" id="PF03725">
    <property type="entry name" value="RNase_PH_C"/>
    <property type="match status" value="1"/>
</dbReference>
<dbReference type="SUPFAM" id="SSF55666">
    <property type="entry name" value="Ribonuclease PH domain 2-like"/>
    <property type="match status" value="1"/>
</dbReference>
<dbReference type="SUPFAM" id="SSF54211">
    <property type="entry name" value="Ribosomal protein S5 domain 2-like"/>
    <property type="match status" value="1"/>
</dbReference>
<dbReference type="PROSITE" id="PS01277">
    <property type="entry name" value="RIBONUCLEASE_PH"/>
    <property type="match status" value="1"/>
</dbReference>
<comment type="function">
    <text evidence="1">Phosphorolytic 3'-5' exoribonuclease that plays an important role in tRNA 3'-end maturation. Removes nucleotide residues following the 3'-CCA terminus of tRNAs; can also add nucleotides to the ends of RNA molecules by using nucleoside diphosphates as substrates, but this may not be physiologically important. Probably plays a role in initiation of 16S rRNA degradation (leading to ribosome degradation) during starvation.</text>
</comment>
<comment type="catalytic activity">
    <reaction evidence="1">
        <text>tRNA(n+1) + phosphate = tRNA(n) + a ribonucleoside 5'-diphosphate</text>
        <dbReference type="Rhea" id="RHEA:10628"/>
        <dbReference type="Rhea" id="RHEA-COMP:17343"/>
        <dbReference type="Rhea" id="RHEA-COMP:17344"/>
        <dbReference type="ChEBI" id="CHEBI:43474"/>
        <dbReference type="ChEBI" id="CHEBI:57930"/>
        <dbReference type="ChEBI" id="CHEBI:173114"/>
        <dbReference type="EC" id="2.7.7.56"/>
    </reaction>
</comment>
<comment type="subunit">
    <text evidence="1">Homohexameric ring arranged as a trimer of dimers.</text>
</comment>
<comment type="similarity">
    <text evidence="1">Belongs to the RNase PH family.</text>
</comment>
<proteinExistence type="inferred from homology"/>
<reference key="1">
    <citation type="journal article" date="2008" name="Proc. Natl. Acad. Sci. U.S.A.">
        <title>Niche adaptation and genome expansion in the chlorophyll d-producing cyanobacterium Acaryochloris marina.</title>
        <authorList>
            <person name="Swingley W.D."/>
            <person name="Chen M."/>
            <person name="Cheung P.C."/>
            <person name="Conrad A.L."/>
            <person name="Dejesa L.C."/>
            <person name="Hao J."/>
            <person name="Honchak B.M."/>
            <person name="Karbach L.E."/>
            <person name="Kurdoglu A."/>
            <person name="Lahiri S."/>
            <person name="Mastrian S.D."/>
            <person name="Miyashita H."/>
            <person name="Page L."/>
            <person name="Ramakrishna P."/>
            <person name="Satoh S."/>
            <person name="Sattley W.M."/>
            <person name="Shimada Y."/>
            <person name="Taylor H.L."/>
            <person name="Tomo T."/>
            <person name="Tsuchiya T."/>
            <person name="Wang Z.T."/>
            <person name="Raymond J."/>
            <person name="Mimuro M."/>
            <person name="Blankenship R.E."/>
            <person name="Touchman J.W."/>
        </authorList>
    </citation>
    <scope>NUCLEOTIDE SEQUENCE [LARGE SCALE GENOMIC DNA]</scope>
    <source>
        <strain>MBIC 11017</strain>
    </source>
</reference>